<organism>
    <name type="scientific">Staphylococcus aureus (strain MW2)</name>
    <dbReference type="NCBI Taxonomy" id="196620"/>
    <lineage>
        <taxon>Bacteria</taxon>
        <taxon>Bacillati</taxon>
        <taxon>Bacillota</taxon>
        <taxon>Bacilli</taxon>
        <taxon>Bacillales</taxon>
        <taxon>Staphylococcaceae</taxon>
        <taxon>Staphylococcus</taxon>
    </lineage>
</organism>
<keyword id="KW-1003">Cell membrane</keyword>
<keyword id="KW-0418">Kinase</keyword>
<keyword id="KW-0472">Membrane</keyword>
<keyword id="KW-0597">Phosphoprotein</keyword>
<keyword id="KW-0598">Phosphotransferase system</keyword>
<keyword id="KW-0762">Sugar transport</keyword>
<keyword id="KW-0808">Transferase</keyword>
<keyword id="KW-0812">Transmembrane</keyword>
<keyword id="KW-1133">Transmembrane helix</keyword>
<keyword id="KW-0813">Transport</keyword>
<gene>
    <name evidence="1" type="primary">lacE</name>
    <name type="ordered locus">MW2116</name>
</gene>
<sequence length="570" mass="62432">MMQKLIAQIEKGKPFFEKLSRNIYLRAIRDGFISAMPVILFSSIFLLIAYVPNIFGFKWDKGMEAILMKPYNYTMGLVAFLVAGTTAKSLTDSFNRKLESTNQINFISTMLAAMCGFLFLASDPAKDGGFLSAFMGTKGLLTAFLSAFVTVIVYNFCVKRNITIKMPKEVPPNISQVFKDLIPFSAVIIILYALDLVIRNSFKSNVAEGILKLFEPLFTAADGWIGVTIIFGAFALFWFVGIHGPSIVEPAIAAITYANIEANFKLLQAGEHADKIITSGTQMFIVTFGGTGATLVVPFMFMWMTKSKRNKAIGRASVVPTFFGVNEPILFGAPLVLNPVFFIPFVLAPIVNVWIFKLFVEVLGMNSFSVNLPWTTPGPLGIIMGTGFGLWSFVLAITLIVVDIIIYYPFLKVYDSEILDEEEGRKESNSDLKEKVAANFDTKKADSILAASGVSDDAAKASNITEQTNVLVLCAGGGTSGLLANALNKAAEEYHVPVKAAAGGYGAHMDIMKEYQLIILAPQVASNYEDIKQDTDRLGIKLAKTQGAEYIKLTRDGQAALDFVQQQFEN</sequence>
<dbReference type="EC" id="2.7.1.207" evidence="1"/>
<dbReference type="EMBL" id="BA000033">
    <property type="protein sequence ID" value="BAB95981.1"/>
    <property type="molecule type" value="Genomic_DNA"/>
</dbReference>
<dbReference type="RefSeq" id="WP_000983330.1">
    <property type="nucleotide sequence ID" value="NC_003923.1"/>
</dbReference>
<dbReference type="SMR" id="Q7A092"/>
<dbReference type="KEGG" id="sam:MW2116"/>
<dbReference type="HOGENOM" id="CLU_029688_0_0_9"/>
<dbReference type="GO" id="GO:0005886">
    <property type="term" value="C:plasma membrane"/>
    <property type="evidence" value="ECO:0007669"/>
    <property type="project" value="UniProtKB-SubCell"/>
</dbReference>
<dbReference type="GO" id="GO:0016301">
    <property type="term" value="F:kinase activity"/>
    <property type="evidence" value="ECO:0007669"/>
    <property type="project" value="UniProtKB-KW"/>
</dbReference>
<dbReference type="GO" id="GO:0022869">
    <property type="term" value="F:protein-N(PI)-phosphohistidine-lactose phosphotransferase system transporter activity"/>
    <property type="evidence" value="ECO:0007669"/>
    <property type="project" value="InterPro"/>
</dbReference>
<dbReference type="GO" id="GO:1901264">
    <property type="term" value="P:carbohydrate derivative transport"/>
    <property type="evidence" value="ECO:0007669"/>
    <property type="project" value="TreeGrafter"/>
</dbReference>
<dbReference type="GO" id="GO:0009401">
    <property type="term" value="P:phosphoenolpyruvate-dependent sugar phosphotransferase system"/>
    <property type="evidence" value="ECO:0007669"/>
    <property type="project" value="UniProtKB-KW"/>
</dbReference>
<dbReference type="CDD" id="cd05565">
    <property type="entry name" value="PTS_IIB_lactose"/>
    <property type="match status" value="1"/>
</dbReference>
<dbReference type="Gene3D" id="3.40.50.2300">
    <property type="match status" value="1"/>
</dbReference>
<dbReference type="InterPro" id="IPR004801">
    <property type="entry name" value="LacE"/>
</dbReference>
<dbReference type="InterPro" id="IPR036095">
    <property type="entry name" value="PTS_EIIB-like_sf"/>
</dbReference>
<dbReference type="InterPro" id="IPR003501">
    <property type="entry name" value="PTS_EIIB_2/3"/>
</dbReference>
<dbReference type="InterPro" id="IPR013012">
    <property type="entry name" value="PTS_EIIB_3"/>
</dbReference>
<dbReference type="InterPro" id="IPR003352">
    <property type="entry name" value="PTS_EIIC"/>
</dbReference>
<dbReference type="InterPro" id="IPR004501">
    <property type="entry name" value="PTS_EIIC_3"/>
</dbReference>
<dbReference type="InterPro" id="IPR041713">
    <property type="entry name" value="PTS_IIB"/>
</dbReference>
<dbReference type="InterPro" id="IPR051088">
    <property type="entry name" value="PTS_Sugar-EIIC/EIIB"/>
</dbReference>
<dbReference type="NCBIfam" id="TIGR00394">
    <property type="entry name" value="lac_pts_IIC"/>
    <property type="match status" value="1"/>
</dbReference>
<dbReference type="NCBIfam" id="TIGR00410">
    <property type="entry name" value="lacE"/>
    <property type="match status" value="1"/>
</dbReference>
<dbReference type="NCBIfam" id="TIGR00853">
    <property type="entry name" value="pts-lac"/>
    <property type="match status" value="1"/>
</dbReference>
<dbReference type="PANTHER" id="PTHR33989">
    <property type="match status" value="1"/>
</dbReference>
<dbReference type="PANTHER" id="PTHR33989:SF8">
    <property type="entry name" value="PERMEASE IIC COMPONENT"/>
    <property type="match status" value="1"/>
</dbReference>
<dbReference type="Pfam" id="PF02378">
    <property type="entry name" value="PTS_EIIC"/>
    <property type="match status" value="1"/>
</dbReference>
<dbReference type="Pfam" id="PF02302">
    <property type="entry name" value="PTS_IIB"/>
    <property type="match status" value="1"/>
</dbReference>
<dbReference type="SUPFAM" id="SSF52794">
    <property type="entry name" value="PTS system IIB component-like"/>
    <property type="match status" value="1"/>
</dbReference>
<dbReference type="PROSITE" id="PS51100">
    <property type="entry name" value="PTS_EIIB_TYPE_3"/>
    <property type="match status" value="1"/>
</dbReference>
<dbReference type="PROSITE" id="PS51105">
    <property type="entry name" value="PTS_EIIC_TYPE_3"/>
    <property type="match status" value="1"/>
</dbReference>
<evidence type="ECO:0000250" key="1">
    <source>
        <dbReference type="UniProtKB" id="P11162"/>
    </source>
</evidence>
<evidence type="ECO:0000255" key="2">
    <source>
        <dbReference type="PROSITE-ProRule" id="PRU00423"/>
    </source>
</evidence>
<evidence type="ECO:0000255" key="3">
    <source>
        <dbReference type="PROSITE-ProRule" id="PRU00428"/>
    </source>
</evidence>
<protein>
    <recommendedName>
        <fullName evidence="1">PTS system lactose-specific EIICB component</fullName>
    </recommendedName>
    <alternativeName>
        <fullName evidence="1">EIICB-Lac</fullName>
        <shortName evidence="1">EII-Lac</shortName>
    </alternativeName>
    <domain>
        <recommendedName>
            <fullName evidence="1">PTS system lactose-specific EIIC component</fullName>
        </recommendedName>
        <alternativeName>
            <fullName evidence="1">Lactose permease IIC component</fullName>
        </alternativeName>
    </domain>
    <domain>
        <recommendedName>
            <fullName evidence="1">PTS system lactose-specific EIIB component</fullName>
            <ecNumber evidence="1">2.7.1.207</ecNumber>
        </recommendedName>
        <alternativeName>
            <fullName evidence="1">Lactose-specific phosphotransferase enzyme IIB component</fullName>
        </alternativeName>
    </domain>
</protein>
<feature type="chain" id="PRO_0000186590" description="PTS system lactose-specific EIICB component">
    <location>
        <begin position="1"/>
        <end position="570"/>
    </location>
</feature>
<feature type="transmembrane region" description="Helical" evidence="3">
    <location>
        <begin position="31"/>
        <end position="51"/>
    </location>
</feature>
<feature type="transmembrane region" description="Helical" evidence="3">
    <location>
        <begin position="65"/>
        <end position="85"/>
    </location>
</feature>
<feature type="transmembrane region" description="Helical" evidence="3">
    <location>
        <begin position="104"/>
        <end position="124"/>
    </location>
</feature>
<feature type="transmembrane region" description="Helical" evidence="3">
    <location>
        <begin position="133"/>
        <end position="153"/>
    </location>
</feature>
<feature type="transmembrane region" description="Helical" evidence="3">
    <location>
        <begin position="178"/>
        <end position="198"/>
    </location>
</feature>
<feature type="transmembrane region" description="Helical" evidence="3">
    <location>
        <begin position="223"/>
        <end position="243"/>
    </location>
</feature>
<feature type="transmembrane region" description="Helical" evidence="3">
    <location>
        <begin position="283"/>
        <end position="303"/>
    </location>
</feature>
<feature type="transmembrane region" description="Helical" evidence="3">
    <location>
        <begin position="340"/>
        <end position="360"/>
    </location>
</feature>
<feature type="transmembrane region" description="Helical" evidence="3">
    <location>
        <begin position="382"/>
        <end position="402"/>
    </location>
</feature>
<feature type="domain" description="PTS EIIC type-3" evidence="3">
    <location>
        <begin position="9"/>
        <end position="410"/>
    </location>
</feature>
<feature type="domain" description="PTS EIIB type-3" evidence="2">
    <location>
        <begin position="467"/>
        <end position="570"/>
    </location>
</feature>
<feature type="active site" description="Phosphocysteine intermediate; for EIIB activity" evidence="1">
    <location>
        <position position="474"/>
    </location>
</feature>
<feature type="modified residue" description="Phosphocysteine; by EIIA" evidence="1 2">
    <location>
        <position position="474"/>
    </location>
</feature>
<name>PTLCB_STAAW</name>
<proteinExistence type="inferred from homology"/>
<comment type="function">
    <text evidence="1">The phosphoenolpyruvate-dependent sugar phosphotransferase system (sugar PTS), a major carbohydrate active transport system, catalyzes the phosphorylation of incoming sugar substrates concomitantly with their translocation across the cell membrane. The enzyme II LacEF PTS system is involved in lactose transport.</text>
</comment>
<comment type="catalytic activity">
    <reaction evidence="1">
        <text>lactose(out) + N(pros)-phospho-L-histidyl-[protein] = lactose 6-phosphate(in) + L-histidyl-[protein]</text>
        <dbReference type="Rhea" id="RHEA:42400"/>
        <dbReference type="Rhea" id="RHEA-COMP:9745"/>
        <dbReference type="Rhea" id="RHEA-COMP:9746"/>
        <dbReference type="ChEBI" id="CHEBI:17716"/>
        <dbReference type="ChEBI" id="CHEBI:29979"/>
        <dbReference type="ChEBI" id="CHEBI:64837"/>
        <dbReference type="ChEBI" id="CHEBI:79080"/>
        <dbReference type="EC" id="2.7.1.207"/>
    </reaction>
</comment>
<comment type="subcellular location">
    <subcellularLocation>
        <location evidence="1 3">Cell membrane</location>
        <topology evidence="1 3">Multi-pass membrane protein</topology>
    </subcellularLocation>
</comment>
<comment type="induction">
    <text evidence="1">Induced by lactose, galactose and galactose-6-P. Repressed by glucose.</text>
</comment>
<comment type="domain">
    <text evidence="3">The EIIC type-3 domain forms the PTS system translocation channel and contains the specific substrate-binding site.</text>
</comment>
<comment type="domain">
    <text evidence="2">The PTS EIIB type-3 domain is phosphorylated by phospho-EIIA on a cysteinyl residue. Then, it transfers the phosphoryl group to the sugar substrate concomitantly with the sugar uptake processed by the PTS EIIC type-3 domain.</text>
</comment>
<accession>Q7A092</accession>
<reference key="1">
    <citation type="journal article" date="2002" name="Lancet">
        <title>Genome and virulence determinants of high virulence community-acquired MRSA.</title>
        <authorList>
            <person name="Baba T."/>
            <person name="Takeuchi F."/>
            <person name="Kuroda M."/>
            <person name="Yuzawa H."/>
            <person name="Aoki K."/>
            <person name="Oguchi A."/>
            <person name="Nagai Y."/>
            <person name="Iwama N."/>
            <person name="Asano K."/>
            <person name="Naimi T."/>
            <person name="Kuroda H."/>
            <person name="Cui L."/>
            <person name="Yamamoto K."/>
            <person name="Hiramatsu K."/>
        </authorList>
    </citation>
    <scope>NUCLEOTIDE SEQUENCE [LARGE SCALE GENOMIC DNA]</scope>
    <source>
        <strain>MW2</strain>
    </source>
</reference>